<feature type="chain" id="PRO_0000311207" description="Cytochrome c oxidase assembly protein CtaG">
    <location>
        <begin position="1"/>
        <end position="194"/>
    </location>
</feature>
<feature type="topological domain" description="Cytoplasmic" evidence="1">
    <location>
        <begin position="1"/>
        <end position="12"/>
    </location>
</feature>
<feature type="transmembrane region" description="Helical; Signal-anchor for type II membrane protein" evidence="1">
    <location>
        <begin position="13"/>
        <end position="35"/>
    </location>
</feature>
<feature type="topological domain" description="Periplasmic" evidence="1">
    <location>
        <begin position="36"/>
        <end position="194"/>
    </location>
</feature>
<proteinExistence type="inferred from homology"/>
<keyword id="KW-0997">Cell inner membrane</keyword>
<keyword id="KW-1003">Cell membrane</keyword>
<keyword id="KW-0186">Copper</keyword>
<keyword id="KW-0472">Membrane</keyword>
<keyword id="KW-1185">Reference proteome</keyword>
<keyword id="KW-0735">Signal-anchor</keyword>
<keyword id="KW-0812">Transmembrane</keyword>
<keyword id="KW-1133">Transmembrane helix</keyword>
<comment type="function">
    <text evidence="1">Exerts its effect at some terminal stage of cytochrome c oxidase synthesis, probably by being involved in the insertion of the copper B into subunit I.</text>
</comment>
<comment type="subcellular location">
    <subcellularLocation>
        <location evidence="1">Cell inner membrane</location>
        <topology evidence="1">Single-pass type II membrane protein</topology>
        <orientation evidence="1">Periplasmic side</orientation>
    </subcellularLocation>
</comment>
<comment type="similarity">
    <text evidence="1">Belongs to the COX11/CtaG family.</text>
</comment>
<reference key="1">
    <citation type="journal article" date="2007" name="J. Bacteriol.">
        <title>The complete genome sequence of Roseobacter denitrificans reveals a mixotrophic rather than photosynthetic metabolism.</title>
        <authorList>
            <person name="Swingley W.D."/>
            <person name="Sadekar S."/>
            <person name="Mastrian S.D."/>
            <person name="Matthies H.J."/>
            <person name="Hao J."/>
            <person name="Ramos H."/>
            <person name="Acharya C.R."/>
            <person name="Conrad A.L."/>
            <person name="Taylor H.L."/>
            <person name="Dejesa L.C."/>
            <person name="Shah M.K."/>
            <person name="O'Huallachain M.E."/>
            <person name="Lince M.T."/>
            <person name="Blankenship R.E."/>
            <person name="Beatty J.T."/>
            <person name="Touchman J.W."/>
        </authorList>
    </citation>
    <scope>NUCLEOTIDE SEQUENCE [LARGE SCALE GENOMIC DNA]</scope>
    <source>
        <strain>ATCC 33942 / OCh 114</strain>
    </source>
</reference>
<dbReference type="EMBL" id="CP000362">
    <property type="protein sequence ID" value="ABG31734.1"/>
    <property type="molecule type" value="Genomic_DNA"/>
</dbReference>
<dbReference type="RefSeq" id="WP_011568351.1">
    <property type="nucleotide sequence ID" value="NC_008209.1"/>
</dbReference>
<dbReference type="SMR" id="Q167V9"/>
<dbReference type="STRING" id="375451.RD1_2138"/>
<dbReference type="KEGG" id="rde:RD1_2138"/>
<dbReference type="eggNOG" id="COG3175">
    <property type="taxonomic scope" value="Bacteria"/>
</dbReference>
<dbReference type="HOGENOM" id="CLU_045000_5_0_5"/>
<dbReference type="OrthoDB" id="9804841at2"/>
<dbReference type="Proteomes" id="UP000007029">
    <property type="component" value="Chromosome"/>
</dbReference>
<dbReference type="GO" id="GO:0005886">
    <property type="term" value="C:plasma membrane"/>
    <property type="evidence" value="ECO:0007669"/>
    <property type="project" value="UniProtKB-SubCell"/>
</dbReference>
<dbReference type="GO" id="GO:0005507">
    <property type="term" value="F:copper ion binding"/>
    <property type="evidence" value="ECO:0007669"/>
    <property type="project" value="InterPro"/>
</dbReference>
<dbReference type="GO" id="GO:0008535">
    <property type="term" value="P:respiratory chain complex IV assembly"/>
    <property type="evidence" value="ECO:0007669"/>
    <property type="project" value="UniProtKB-UniRule"/>
</dbReference>
<dbReference type="FunFam" id="2.60.370.10:FF:000001">
    <property type="entry name" value="COX11 cytochrome c oxidase assembly homolog"/>
    <property type="match status" value="1"/>
</dbReference>
<dbReference type="Gene3D" id="2.60.370.10">
    <property type="entry name" value="Ctag/Cox11"/>
    <property type="match status" value="1"/>
</dbReference>
<dbReference type="HAMAP" id="MF_00155">
    <property type="entry name" value="CtaG"/>
    <property type="match status" value="1"/>
</dbReference>
<dbReference type="InterPro" id="IPR023471">
    <property type="entry name" value="CtaG/Cox11_dom_sf"/>
</dbReference>
<dbReference type="InterPro" id="IPR007533">
    <property type="entry name" value="Cyt_c_oxidase_assmbl_CtaG"/>
</dbReference>
<dbReference type="NCBIfam" id="NF003465">
    <property type="entry name" value="PRK05089.1"/>
    <property type="match status" value="1"/>
</dbReference>
<dbReference type="PANTHER" id="PTHR21320:SF3">
    <property type="entry name" value="CYTOCHROME C OXIDASE ASSEMBLY PROTEIN COX11, MITOCHONDRIAL-RELATED"/>
    <property type="match status" value="1"/>
</dbReference>
<dbReference type="PANTHER" id="PTHR21320">
    <property type="entry name" value="CYTOCHROME C OXIDASE ASSEMBLY PROTEIN COX11-RELATED"/>
    <property type="match status" value="1"/>
</dbReference>
<dbReference type="Pfam" id="PF04442">
    <property type="entry name" value="CtaG_Cox11"/>
    <property type="match status" value="1"/>
</dbReference>
<dbReference type="PIRSF" id="PIRSF005413">
    <property type="entry name" value="COX11"/>
    <property type="match status" value="1"/>
</dbReference>
<dbReference type="SUPFAM" id="SSF110111">
    <property type="entry name" value="Ctag/Cox11"/>
    <property type="match status" value="1"/>
</dbReference>
<gene>
    <name evidence="1" type="primary">ctaG</name>
    <name type="ordered locus">RD1_2138</name>
</gene>
<organism>
    <name type="scientific">Roseobacter denitrificans (strain ATCC 33942 / OCh 114)</name>
    <name type="common">Erythrobacter sp. (strain OCh 114)</name>
    <name type="synonym">Roseobacter denitrificans</name>
    <dbReference type="NCBI Taxonomy" id="375451"/>
    <lineage>
        <taxon>Bacteria</taxon>
        <taxon>Pseudomonadati</taxon>
        <taxon>Pseudomonadota</taxon>
        <taxon>Alphaproteobacteria</taxon>
        <taxon>Rhodobacterales</taxon>
        <taxon>Roseobacteraceae</taxon>
        <taxon>Roseobacter</taxon>
    </lineage>
</organism>
<accession>Q167V9</accession>
<protein>
    <recommendedName>
        <fullName evidence="1">Cytochrome c oxidase assembly protein CtaG</fullName>
    </recommendedName>
</protein>
<sequence>MALRGPAKTVAQTVSVVIFMGALAWASVPLYDWFCRVTGFGGVTGVSDVAPEDILDQTITIRFDGSLNNHMPWEFKPVVREMDVRIGESGLAFYEAYNPTDRPVAGSASYNVTPYQAGGFFNKIQCFCFEEQVLQPGERVQMPVTFYVDPEIVDDRDGKHVHTITLSYTFYEIDLPEEYADAQDIEENSDTSLN</sequence>
<evidence type="ECO:0000255" key="1">
    <source>
        <dbReference type="HAMAP-Rule" id="MF_00155"/>
    </source>
</evidence>
<name>COXZ_ROSDO</name>